<accession>Q9CJ83</accession>
<sequence length="88" mass="9179">MASKEFHIVVETGIHARPATLLVHTASKFTSEITLEYKGKSVNLKSIMGVMSLGVGQGADVTISAEGADADDAISTIAETMTKEGLAE</sequence>
<feature type="chain" id="PRO_0000107857" description="Phosphocarrier protein HPr">
    <location>
        <begin position="1"/>
        <end position="88"/>
    </location>
</feature>
<feature type="domain" description="HPr" evidence="2">
    <location>
        <begin position="1"/>
        <end position="88"/>
    </location>
</feature>
<feature type="active site" description="Pros-phosphohistidine intermediate" evidence="2">
    <location>
        <position position="15"/>
    </location>
</feature>
<feature type="modified residue" description="Phosphoserine; by HPrK/P" evidence="2 3">
    <location>
        <position position="46"/>
    </location>
</feature>
<feature type="mutagenesis site" description="Abolished S-46 phosphorylation." evidence="3">
    <original>S</original>
    <variation>A</variation>
    <location>
        <position position="46"/>
    </location>
</feature>
<gene>
    <name type="primary">ptsH</name>
    <name type="ordered locus">LL0117</name>
    <name type="ORF">L120335</name>
</gene>
<evidence type="ECO:0000250" key="1"/>
<evidence type="ECO:0000255" key="2">
    <source>
        <dbReference type="PROSITE-ProRule" id="PRU00681"/>
    </source>
</evidence>
<evidence type="ECO:0000269" key="3">
    <source>
    </source>
</evidence>
<evidence type="ECO:0000305" key="4"/>
<protein>
    <recommendedName>
        <fullName>Phosphocarrier protein HPr</fullName>
    </recommendedName>
    <alternativeName>
        <fullName>Histidine-containing protein</fullName>
    </alternativeName>
</protein>
<name>PTHP_LACLA</name>
<comment type="function">
    <text evidence="1">General (non sugar-specific) component of the phosphoenolpyruvate-dependent sugar phosphotransferase system (sugar PTS). This major carbohydrate active-transport system catalyzes the phosphorylation of incoming sugar substrates concomitantly with their translocation across the cell membrane. The phosphoryl group from phosphoenolpyruvate (PEP) is transferred to the phosphoryl carrier protein HPr by enzyme I. Phospho-HPr then transfers it to the PTS EIIA domain.</text>
</comment>
<comment type="function">
    <text evidence="1">P-Ser-HPr interacts with the catabolite control protein A (CcpA), forming a complex that binds to DNA at the catabolite response elements cre, operator sites preceding a large number of catabolite-regulated genes. Thus, P-Ser-HPr is a corepressor in carbon catabolite repression (CCR), a mechanism that allows bacteria to coordinate and optimize the utilization of available carbon sources. P-Ser-HPr also plays a role in inducer exclusion, in which it probably interacts with several non-PTS permeases and inhibits their transport activity (By similarity).</text>
</comment>
<comment type="activity regulation">
    <text evidence="1">Phosphorylation on Ser-46 inhibits the phosphoryl transfer from enzyme I to HPr.</text>
</comment>
<comment type="subcellular location">
    <subcellularLocation>
        <location evidence="1">Cytoplasm</location>
    </subcellularLocation>
</comment>
<comment type="similarity">
    <text evidence="4">Belongs to the HPr family.</text>
</comment>
<keyword id="KW-0963">Cytoplasm</keyword>
<keyword id="KW-0597">Phosphoprotein</keyword>
<keyword id="KW-0598">Phosphotransferase system</keyword>
<keyword id="KW-1185">Reference proteome</keyword>
<keyword id="KW-0762">Sugar transport</keyword>
<keyword id="KW-0804">Transcription</keyword>
<keyword id="KW-0805">Transcription regulation</keyword>
<keyword id="KW-0813">Transport</keyword>
<dbReference type="EMBL" id="AE005176">
    <property type="protein sequence ID" value="AAK04215.1"/>
    <property type="molecule type" value="Genomic_DNA"/>
</dbReference>
<dbReference type="PIR" id="E86639">
    <property type="entry name" value="E86639"/>
</dbReference>
<dbReference type="RefSeq" id="NP_266273.1">
    <property type="nucleotide sequence ID" value="NC_002662.1"/>
</dbReference>
<dbReference type="RefSeq" id="WP_010905128.1">
    <property type="nucleotide sequence ID" value="NC_002662.1"/>
</dbReference>
<dbReference type="SMR" id="Q9CJ83"/>
<dbReference type="iPTMnet" id="Q9CJ83"/>
<dbReference type="PaxDb" id="272623-L120335"/>
<dbReference type="EnsemblBacteria" id="AAK04215">
    <property type="protein sequence ID" value="AAK04215"/>
    <property type="gene ID" value="L120335"/>
</dbReference>
<dbReference type="KEGG" id="lla:L120335"/>
<dbReference type="PATRIC" id="fig|272623.7.peg.131"/>
<dbReference type="eggNOG" id="COG1925">
    <property type="taxonomic scope" value="Bacteria"/>
</dbReference>
<dbReference type="HOGENOM" id="CLU_136230_2_1_9"/>
<dbReference type="OrthoDB" id="9809047at2"/>
<dbReference type="Proteomes" id="UP000002196">
    <property type="component" value="Chromosome"/>
</dbReference>
<dbReference type="GO" id="GO:0005737">
    <property type="term" value="C:cytoplasm"/>
    <property type="evidence" value="ECO:0007669"/>
    <property type="project" value="UniProtKB-SubCell"/>
</dbReference>
<dbReference type="GO" id="GO:0009401">
    <property type="term" value="P:phosphoenolpyruvate-dependent sugar phosphotransferase system"/>
    <property type="evidence" value="ECO:0007669"/>
    <property type="project" value="UniProtKB-KW"/>
</dbReference>
<dbReference type="CDD" id="cd00367">
    <property type="entry name" value="PTS-HPr_like"/>
    <property type="match status" value="1"/>
</dbReference>
<dbReference type="Gene3D" id="3.30.1340.10">
    <property type="entry name" value="HPr-like"/>
    <property type="match status" value="1"/>
</dbReference>
<dbReference type="InterPro" id="IPR050399">
    <property type="entry name" value="HPr"/>
</dbReference>
<dbReference type="InterPro" id="IPR000032">
    <property type="entry name" value="HPr-like"/>
</dbReference>
<dbReference type="InterPro" id="IPR035895">
    <property type="entry name" value="HPr-like_sf"/>
</dbReference>
<dbReference type="InterPro" id="IPR001020">
    <property type="entry name" value="PTS_HPr_His_P_site"/>
</dbReference>
<dbReference type="InterPro" id="IPR002114">
    <property type="entry name" value="PTS_HPr_Ser_P_site"/>
</dbReference>
<dbReference type="NCBIfam" id="NF010352">
    <property type="entry name" value="PRK13780.1"/>
    <property type="match status" value="1"/>
</dbReference>
<dbReference type="NCBIfam" id="TIGR01003">
    <property type="entry name" value="PTS_HPr_family"/>
    <property type="match status" value="1"/>
</dbReference>
<dbReference type="PANTHER" id="PTHR33705">
    <property type="entry name" value="PHOSPHOCARRIER PROTEIN HPR"/>
    <property type="match status" value="1"/>
</dbReference>
<dbReference type="PANTHER" id="PTHR33705:SF2">
    <property type="entry name" value="PHOSPHOCARRIER PROTEIN NPR"/>
    <property type="match status" value="1"/>
</dbReference>
<dbReference type="Pfam" id="PF00381">
    <property type="entry name" value="PTS-HPr"/>
    <property type="match status" value="1"/>
</dbReference>
<dbReference type="PRINTS" id="PR00107">
    <property type="entry name" value="PHOSPHOCPHPR"/>
</dbReference>
<dbReference type="SUPFAM" id="SSF55594">
    <property type="entry name" value="HPr-like"/>
    <property type="match status" value="1"/>
</dbReference>
<dbReference type="PROSITE" id="PS51350">
    <property type="entry name" value="PTS_HPR_DOM"/>
    <property type="match status" value="1"/>
</dbReference>
<dbReference type="PROSITE" id="PS00369">
    <property type="entry name" value="PTS_HPR_HIS"/>
    <property type="match status" value="1"/>
</dbReference>
<dbReference type="PROSITE" id="PS00589">
    <property type="entry name" value="PTS_HPR_SER"/>
    <property type="match status" value="1"/>
</dbReference>
<reference key="1">
    <citation type="journal article" date="2001" name="Genome Res.">
        <title>The complete genome sequence of the lactic acid bacterium Lactococcus lactis ssp. lactis IL1403.</title>
        <authorList>
            <person name="Bolotin A."/>
            <person name="Wincker P."/>
            <person name="Mauger S."/>
            <person name="Jaillon O."/>
            <person name="Malarme K."/>
            <person name="Weissenbach J."/>
            <person name="Ehrlich S.D."/>
            <person name="Sorokin A."/>
        </authorList>
    </citation>
    <scope>NUCLEOTIDE SEQUENCE [LARGE SCALE GENOMIC DNA]</scope>
    <source>
        <strain>IL1403</strain>
    </source>
</reference>
<reference key="2">
    <citation type="journal article" date="2001" name="J. Bacteriol.">
        <title>Regulatory functions of serine-46-phosphorylated HPr in Lactococcus lactis.</title>
        <authorList>
            <person name="Monedero V."/>
            <person name="Kuipers O.P."/>
            <person name="Jamet E."/>
            <person name="Deutscher J."/>
        </authorList>
    </citation>
    <scope>PHOSPHORYLATION AT SER-46</scope>
    <scope>MUTAGENESIS OF SER-46</scope>
</reference>
<organism>
    <name type="scientific">Lactococcus lactis subsp. lactis (strain IL1403)</name>
    <name type="common">Streptococcus lactis</name>
    <dbReference type="NCBI Taxonomy" id="272623"/>
    <lineage>
        <taxon>Bacteria</taxon>
        <taxon>Bacillati</taxon>
        <taxon>Bacillota</taxon>
        <taxon>Bacilli</taxon>
        <taxon>Lactobacillales</taxon>
        <taxon>Streptococcaceae</taxon>
        <taxon>Lactococcus</taxon>
    </lineage>
</organism>
<proteinExistence type="evidence at protein level"/>